<dbReference type="EMBL" id="AE016795">
    <property type="protein sequence ID" value="AAO09811.1"/>
    <property type="molecule type" value="Genomic_DNA"/>
</dbReference>
<dbReference type="RefSeq" id="WP_011079336.1">
    <property type="nucleotide sequence ID" value="NC_004459.3"/>
</dbReference>
<dbReference type="SMR" id="Q8DCN9"/>
<dbReference type="GeneID" id="93895625"/>
<dbReference type="KEGG" id="vvu:VV1_1360"/>
<dbReference type="HOGENOM" id="CLU_114306_4_3_6"/>
<dbReference type="Proteomes" id="UP000002275">
    <property type="component" value="Chromosome 1"/>
</dbReference>
<dbReference type="GO" id="GO:1990904">
    <property type="term" value="C:ribonucleoprotein complex"/>
    <property type="evidence" value="ECO:0007669"/>
    <property type="project" value="UniProtKB-KW"/>
</dbReference>
<dbReference type="GO" id="GO:0005840">
    <property type="term" value="C:ribosome"/>
    <property type="evidence" value="ECO:0007669"/>
    <property type="project" value="UniProtKB-KW"/>
</dbReference>
<dbReference type="GO" id="GO:0046872">
    <property type="term" value="F:metal ion binding"/>
    <property type="evidence" value="ECO:0007669"/>
    <property type="project" value="UniProtKB-KW"/>
</dbReference>
<dbReference type="GO" id="GO:0019843">
    <property type="term" value="F:rRNA binding"/>
    <property type="evidence" value="ECO:0007669"/>
    <property type="project" value="UniProtKB-KW"/>
</dbReference>
<dbReference type="GO" id="GO:0003735">
    <property type="term" value="F:structural constituent of ribosome"/>
    <property type="evidence" value="ECO:0007669"/>
    <property type="project" value="InterPro"/>
</dbReference>
<dbReference type="GO" id="GO:0006412">
    <property type="term" value="P:translation"/>
    <property type="evidence" value="ECO:0007669"/>
    <property type="project" value="UniProtKB-UniRule"/>
</dbReference>
<dbReference type="Gene3D" id="4.10.830.30">
    <property type="entry name" value="Ribosomal protein L31"/>
    <property type="match status" value="1"/>
</dbReference>
<dbReference type="HAMAP" id="MF_00501">
    <property type="entry name" value="Ribosomal_bL31_1"/>
    <property type="match status" value="1"/>
</dbReference>
<dbReference type="InterPro" id="IPR034704">
    <property type="entry name" value="Ribosomal_bL28/bL31-like_sf"/>
</dbReference>
<dbReference type="InterPro" id="IPR002150">
    <property type="entry name" value="Ribosomal_bL31"/>
</dbReference>
<dbReference type="InterPro" id="IPR027491">
    <property type="entry name" value="Ribosomal_bL31_A"/>
</dbReference>
<dbReference type="InterPro" id="IPR042105">
    <property type="entry name" value="Ribosomal_bL31_sf"/>
</dbReference>
<dbReference type="NCBIfam" id="TIGR00105">
    <property type="entry name" value="L31"/>
    <property type="match status" value="1"/>
</dbReference>
<dbReference type="NCBIfam" id="NF000612">
    <property type="entry name" value="PRK00019.1"/>
    <property type="match status" value="1"/>
</dbReference>
<dbReference type="NCBIfam" id="NF001809">
    <property type="entry name" value="PRK00528.1"/>
    <property type="match status" value="1"/>
</dbReference>
<dbReference type="PANTHER" id="PTHR33280">
    <property type="entry name" value="50S RIBOSOMAL PROTEIN L31, CHLOROPLASTIC"/>
    <property type="match status" value="1"/>
</dbReference>
<dbReference type="PANTHER" id="PTHR33280:SF6">
    <property type="entry name" value="LARGE RIBOSOMAL SUBUNIT PROTEIN BL31A"/>
    <property type="match status" value="1"/>
</dbReference>
<dbReference type="Pfam" id="PF01197">
    <property type="entry name" value="Ribosomal_L31"/>
    <property type="match status" value="1"/>
</dbReference>
<dbReference type="PRINTS" id="PR01249">
    <property type="entry name" value="RIBOSOMALL31"/>
</dbReference>
<dbReference type="SUPFAM" id="SSF143800">
    <property type="entry name" value="L28p-like"/>
    <property type="match status" value="1"/>
</dbReference>
<dbReference type="PROSITE" id="PS01143">
    <property type="entry name" value="RIBOSOMAL_L31"/>
    <property type="match status" value="1"/>
</dbReference>
<organism>
    <name type="scientific">Vibrio vulnificus (strain CMCP6)</name>
    <dbReference type="NCBI Taxonomy" id="216895"/>
    <lineage>
        <taxon>Bacteria</taxon>
        <taxon>Pseudomonadati</taxon>
        <taxon>Pseudomonadota</taxon>
        <taxon>Gammaproteobacteria</taxon>
        <taxon>Vibrionales</taxon>
        <taxon>Vibrionaceae</taxon>
        <taxon>Vibrio</taxon>
    </lineage>
</organism>
<feature type="chain" id="PRO_0000173179" description="Large ribosomal subunit protein bL31">
    <location>
        <begin position="1"/>
        <end position="73"/>
    </location>
</feature>
<feature type="binding site" evidence="1">
    <location>
        <position position="16"/>
    </location>
    <ligand>
        <name>Zn(2+)</name>
        <dbReference type="ChEBI" id="CHEBI:29105"/>
    </ligand>
</feature>
<feature type="binding site" evidence="1">
    <location>
        <position position="18"/>
    </location>
    <ligand>
        <name>Zn(2+)</name>
        <dbReference type="ChEBI" id="CHEBI:29105"/>
    </ligand>
</feature>
<feature type="binding site" evidence="1">
    <location>
        <position position="38"/>
    </location>
    <ligand>
        <name>Zn(2+)</name>
        <dbReference type="ChEBI" id="CHEBI:29105"/>
    </ligand>
</feature>
<feature type="binding site" evidence="1">
    <location>
        <position position="41"/>
    </location>
    <ligand>
        <name>Zn(2+)</name>
        <dbReference type="ChEBI" id="CHEBI:29105"/>
    </ligand>
</feature>
<evidence type="ECO:0000255" key="1">
    <source>
        <dbReference type="HAMAP-Rule" id="MF_00501"/>
    </source>
</evidence>
<evidence type="ECO:0000305" key="2"/>
<comment type="function">
    <text evidence="1">Binds the 23S rRNA.</text>
</comment>
<comment type="cofactor">
    <cofactor evidence="1">
        <name>Zn(2+)</name>
        <dbReference type="ChEBI" id="CHEBI:29105"/>
    </cofactor>
    <text evidence="1">Binds 1 zinc ion per subunit.</text>
</comment>
<comment type="subunit">
    <text evidence="1">Part of the 50S ribosomal subunit.</text>
</comment>
<comment type="similarity">
    <text evidence="1">Belongs to the bacterial ribosomal protein bL31 family. Type A subfamily.</text>
</comment>
<accession>Q8DCN9</accession>
<proteinExistence type="inferred from homology"/>
<protein>
    <recommendedName>
        <fullName evidence="1">Large ribosomal subunit protein bL31</fullName>
    </recommendedName>
    <alternativeName>
        <fullName evidence="2">50S ribosomal protein L31</fullName>
    </alternativeName>
</protein>
<gene>
    <name evidence="1" type="primary">rpmE</name>
    <name type="ordered locus">VV1_1360</name>
</gene>
<keyword id="KW-0479">Metal-binding</keyword>
<keyword id="KW-0687">Ribonucleoprotein</keyword>
<keyword id="KW-0689">Ribosomal protein</keyword>
<keyword id="KW-0694">RNA-binding</keyword>
<keyword id="KW-0699">rRNA-binding</keyword>
<keyword id="KW-0862">Zinc</keyword>
<reference key="1">
    <citation type="submission" date="2002-12" db="EMBL/GenBank/DDBJ databases">
        <title>Complete genome sequence of Vibrio vulnificus CMCP6.</title>
        <authorList>
            <person name="Rhee J.H."/>
            <person name="Kim S.Y."/>
            <person name="Chung S.S."/>
            <person name="Kim J.J."/>
            <person name="Moon Y.H."/>
            <person name="Jeong H."/>
            <person name="Choy H.E."/>
        </authorList>
    </citation>
    <scope>NUCLEOTIDE SEQUENCE [LARGE SCALE GENOMIC DNA]</scope>
    <source>
        <strain>CMCP6</strain>
    </source>
</reference>
<name>RL31_VIBVU</name>
<sequence length="73" mass="8083">MKAGIHPEYKAVNATCSCGNSFVFNSTLDKESIHLDVCDKCHPFYTGKQRIVDTGGRVDRFNKRFGALSSGKK</sequence>